<name>KNH1_CANGA</name>
<reference key="1">
    <citation type="journal article" date="1998" name="J. Bacteriol.">
        <title>Isolation of Candida glabrata homologs of the Saccharomyces cerevisiae KRE9 and KNH1 genes and their involvement in cell wall beta-1,6-glucan synthesis.</title>
        <authorList>
            <person name="Nagahashi S."/>
            <person name="Lussier M."/>
            <person name="Bussey H."/>
        </authorList>
    </citation>
    <scope>NUCLEOTIDE SEQUENCE [GENOMIC DNA]</scope>
    <scope>FUNCTION</scope>
    <source>
        <strain>ATCC 2001 / BCRC 20586 / JCM 3761 / NBRC 0622 / NRRL Y-65 / CBS 138</strain>
    </source>
</reference>
<reference key="2">
    <citation type="journal article" date="2004" name="Nature">
        <title>Genome evolution in yeasts.</title>
        <authorList>
            <person name="Dujon B."/>
            <person name="Sherman D."/>
            <person name="Fischer G."/>
            <person name="Durrens P."/>
            <person name="Casaregola S."/>
            <person name="Lafontaine I."/>
            <person name="de Montigny J."/>
            <person name="Marck C."/>
            <person name="Neuveglise C."/>
            <person name="Talla E."/>
            <person name="Goffard N."/>
            <person name="Frangeul L."/>
            <person name="Aigle M."/>
            <person name="Anthouard V."/>
            <person name="Babour A."/>
            <person name="Barbe V."/>
            <person name="Barnay S."/>
            <person name="Blanchin S."/>
            <person name="Beckerich J.-M."/>
            <person name="Beyne E."/>
            <person name="Bleykasten C."/>
            <person name="Boisrame A."/>
            <person name="Boyer J."/>
            <person name="Cattolico L."/>
            <person name="Confanioleri F."/>
            <person name="de Daruvar A."/>
            <person name="Despons L."/>
            <person name="Fabre E."/>
            <person name="Fairhead C."/>
            <person name="Ferry-Dumazet H."/>
            <person name="Groppi A."/>
            <person name="Hantraye F."/>
            <person name="Hennequin C."/>
            <person name="Jauniaux N."/>
            <person name="Joyet P."/>
            <person name="Kachouri R."/>
            <person name="Kerrest A."/>
            <person name="Koszul R."/>
            <person name="Lemaire M."/>
            <person name="Lesur I."/>
            <person name="Ma L."/>
            <person name="Muller H."/>
            <person name="Nicaud J.-M."/>
            <person name="Nikolski M."/>
            <person name="Oztas S."/>
            <person name="Ozier-Kalogeropoulos O."/>
            <person name="Pellenz S."/>
            <person name="Potier S."/>
            <person name="Richard G.-F."/>
            <person name="Straub M.-L."/>
            <person name="Suleau A."/>
            <person name="Swennen D."/>
            <person name="Tekaia F."/>
            <person name="Wesolowski-Louvel M."/>
            <person name="Westhof E."/>
            <person name="Wirth B."/>
            <person name="Zeniou-Meyer M."/>
            <person name="Zivanovic Y."/>
            <person name="Bolotin-Fukuhara M."/>
            <person name="Thierry A."/>
            <person name="Bouchier C."/>
            <person name="Caudron B."/>
            <person name="Scarpelli C."/>
            <person name="Gaillardin C."/>
            <person name="Weissenbach J."/>
            <person name="Wincker P."/>
            <person name="Souciet J.-L."/>
        </authorList>
    </citation>
    <scope>NUCLEOTIDE SEQUENCE [LARGE SCALE GENOMIC DNA]</scope>
    <source>
        <strain>ATCC 2001 / BCRC 20586 / JCM 3761 / NBRC 0622 / NRRL Y-65 / CBS 138</strain>
    </source>
</reference>
<keyword id="KW-0134">Cell wall</keyword>
<keyword id="KW-0961">Cell wall biogenesis/degradation</keyword>
<keyword id="KW-0325">Glycoprotein</keyword>
<keyword id="KW-1185">Reference proteome</keyword>
<keyword id="KW-0964">Secreted</keyword>
<keyword id="KW-0732">Signal</keyword>
<organism>
    <name type="scientific">Candida glabrata (strain ATCC 2001 / BCRC 20586 / JCM 3761 / NBRC 0622 / NRRL Y-65 / CBS 138)</name>
    <name type="common">Yeast</name>
    <name type="synonym">Nakaseomyces glabratus</name>
    <dbReference type="NCBI Taxonomy" id="284593"/>
    <lineage>
        <taxon>Eukaryota</taxon>
        <taxon>Fungi</taxon>
        <taxon>Dikarya</taxon>
        <taxon>Ascomycota</taxon>
        <taxon>Saccharomycotina</taxon>
        <taxon>Saccharomycetes</taxon>
        <taxon>Saccharomycetales</taxon>
        <taxon>Saccharomycetaceae</taxon>
        <taxon>Nakaseomyces</taxon>
    </lineage>
</organism>
<accession>O74684</accession>
<evidence type="ECO:0000250" key="1"/>
<evidence type="ECO:0000255" key="2"/>
<evidence type="ECO:0000256" key="3">
    <source>
        <dbReference type="SAM" id="MobiDB-lite"/>
    </source>
</evidence>
<evidence type="ECO:0000269" key="4">
    <source>
    </source>
</evidence>
<evidence type="ECO:0000305" key="5"/>
<sequence>MLSIILLLMQLVAADIAVVGPSLDQSFDASGGTAKIPIQWLFTPNTPSQDDFTSLTFSLCSGPNYKIEAFKVIGKLSDIGTTDFEAEVSQSVGANGYYYVQIYAATTDGYTIHYSPRFKLTGMTGSKLPDTLLITAPPTPETRVTTGDLGATIDSKSFDIPYGEQNGKAKFAPMQTQPGTKITATTWSRRYATSAVSFFTSLTATPVQHTTLTPGWSYYISSDYNYAPPAPFPSDNGGWYDPKKRQSFTTRKLNMDKLRKRRQTS</sequence>
<dbReference type="EMBL" id="AF064252">
    <property type="protein sequence ID" value="AAC64009.1"/>
    <property type="molecule type" value="Genomic_DNA"/>
</dbReference>
<dbReference type="EMBL" id="CR380954">
    <property type="protein sequence ID" value="CAG60079.1"/>
    <property type="molecule type" value="Genomic_DNA"/>
</dbReference>
<dbReference type="RefSeq" id="XP_447146.1">
    <property type="nucleotide sequence ID" value="XM_447146.1"/>
</dbReference>
<dbReference type="FunCoup" id="O74684">
    <property type="interactions" value="60"/>
</dbReference>
<dbReference type="STRING" id="284593.O74684"/>
<dbReference type="EnsemblFungi" id="CAGL0H07997g-T">
    <property type="protein sequence ID" value="CAGL0H07997g-T-p1"/>
    <property type="gene ID" value="CAGL0H07997g"/>
</dbReference>
<dbReference type="GeneID" id="2888825"/>
<dbReference type="KEGG" id="cgr:2888825"/>
<dbReference type="CGD" id="CAL0129512">
    <property type="gene designation" value="KNH1"/>
</dbReference>
<dbReference type="VEuPathDB" id="FungiDB:B1J91_H07997g"/>
<dbReference type="VEuPathDB" id="FungiDB:CAGL0H07997g"/>
<dbReference type="eggNOG" id="ENOG502S28F">
    <property type="taxonomic scope" value="Eukaryota"/>
</dbReference>
<dbReference type="HOGENOM" id="CLU_063732_1_0_1"/>
<dbReference type="InParanoid" id="O74684"/>
<dbReference type="OMA" id="YYYFQIY"/>
<dbReference type="Proteomes" id="UP000002428">
    <property type="component" value="Chromosome H"/>
</dbReference>
<dbReference type="GO" id="GO:0005576">
    <property type="term" value="C:extracellular region"/>
    <property type="evidence" value="ECO:0007669"/>
    <property type="project" value="UniProtKB-KW"/>
</dbReference>
<dbReference type="GO" id="GO:0006078">
    <property type="term" value="P:(1-&gt;6)-beta-D-glucan biosynthetic process"/>
    <property type="evidence" value="ECO:0007669"/>
    <property type="project" value="EnsemblFungi"/>
</dbReference>
<dbReference type="GO" id="GO:0042546">
    <property type="term" value="P:cell wall biogenesis"/>
    <property type="evidence" value="ECO:0007669"/>
    <property type="project" value="InterPro"/>
</dbReference>
<dbReference type="GO" id="GO:0031505">
    <property type="term" value="P:fungal-type cell wall organization"/>
    <property type="evidence" value="ECO:0007669"/>
    <property type="project" value="TreeGrafter"/>
</dbReference>
<dbReference type="InterPro" id="IPR045328">
    <property type="entry name" value="Kre9/Knh1"/>
</dbReference>
<dbReference type="InterPro" id="IPR018466">
    <property type="entry name" value="Kre9/Knh1-like_N"/>
</dbReference>
<dbReference type="InterPro" id="IPR008659">
    <property type="entry name" value="Kre9/Knh1_C"/>
</dbReference>
<dbReference type="PANTHER" id="PTHR28154">
    <property type="entry name" value="CELL WALL SYNTHESIS PROTEIN KNH1-RELATED"/>
    <property type="match status" value="1"/>
</dbReference>
<dbReference type="PANTHER" id="PTHR28154:SF1">
    <property type="entry name" value="CELL WALL SYNTHESIS PROTEIN KNH1-RELATED"/>
    <property type="match status" value="1"/>
</dbReference>
<dbReference type="Pfam" id="PF10342">
    <property type="entry name" value="Kre9_KNH"/>
    <property type="match status" value="1"/>
</dbReference>
<dbReference type="Pfam" id="PF05390">
    <property type="entry name" value="Kre9_KNH1_C"/>
    <property type="match status" value="1"/>
</dbReference>
<feature type="signal peptide" evidence="2">
    <location>
        <begin position="1"/>
        <end position="14"/>
    </location>
</feature>
<feature type="chain" id="PRO_0000016850" description="Cell wall synthesis protein KNH1">
    <location>
        <begin position="15"/>
        <end position="265"/>
    </location>
</feature>
<feature type="region of interest" description="Disordered" evidence="3">
    <location>
        <begin position="231"/>
        <end position="265"/>
    </location>
</feature>
<proteinExistence type="inferred from homology"/>
<protein>
    <recommendedName>
        <fullName>Cell wall synthesis protein KNH1</fullName>
    </recommendedName>
</protein>
<gene>
    <name type="primary">KNH1</name>
    <name type="ordered locus">CAGL0H07997g</name>
</gene>
<comment type="function">
    <text evidence="4">Involved in cell wall beta(1-&gt;6) glucan synthesis.</text>
</comment>
<comment type="subcellular location">
    <subcellularLocation>
        <location evidence="5">Secreted</location>
        <location evidence="5">Cell wall</location>
    </subcellularLocation>
</comment>
<comment type="PTM">
    <text evidence="1">O-glycosylated.</text>
</comment>
<comment type="similarity">
    <text evidence="5">Belongs to the KRE9/KNH1 family.</text>
</comment>